<feature type="chain" id="PRO_0000385214" description="Serrate RNA effector molecule homolog">
    <location>
        <begin position="1"/>
        <end position="937"/>
    </location>
</feature>
<feature type="region of interest" description="Disordered" evidence="2">
    <location>
        <begin position="1"/>
        <end position="87"/>
    </location>
</feature>
<feature type="region of interest" description="Disordered" evidence="2">
    <location>
        <begin position="109"/>
        <end position="128"/>
    </location>
</feature>
<feature type="region of interest" description="Disordered" evidence="2">
    <location>
        <begin position="293"/>
        <end position="507"/>
    </location>
</feature>
<feature type="region of interest" description="Disordered" evidence="2">
    <location>
        <begin position="847"/>
        <end position="874"/>
    </location>
</feature>
<feature type="compositionally biased region" description="Basic and acidic residues" evidence="2">
    <location>
        <begin position="8"/>
        <end position="22"/>
    </location>
</feature>
<feature type="compositionally biased region" description="Basic and acidic residues" evidence="2">
    <location>
        <begin position="29"/>
        <end position="63"/>
    </location>
</feature>
<feature type="compositionally biased region" description="Basic and acidic residues" evidence="2">
    <location>
        <begin position="76"/>
        <end position="87"/>
    </location>
</feature>
<feature type="compositionally biased region" description="Basic and acidic residues" evidence="2">
    <location>
        <begin position="293"/>
        <end position="316"/>
    </location>
</feature>
<feature type="compositionally biased region" description="Basic and acidic residues" evidence="2">
    <location>
        <begin position="323"/>
        <end position="336"/>
    </location>
</feature>
<feature type="compositionally biased region" description="Basic and acidic residues" evidence="2">
    <location>
        <begin position="343"/>
        <end position="356"/>
    </location>
</feature>
<feature type="compositionally biased region" description="Low complexity" evidence="2">
    <location>
        <begin position="367"/>
        <end position="381"/>
    </location>
</feature>
<feature type="compositionally biased region" description="Basic and acidic residues" evidence="2">
    <location>
        <begin position="413"/>
        <end position="452"/>
    </location>
</feature>
<feature type="compositionally biased region" description="Basic and acidic residues" evidence="2">
    <location>
        <begin position="459"/>
        <end position="473"/>
    </location>
</feature>
<feature type="compositionally biased region" description="Basic and acidic residues" evidence="2">
    <location>
        <begin position="480"/>
        <end position="500"/>
    </location>
</feature>
<proteinExistence type="inferred from homology"/>
<gene>
    <name type="primary">Ars2</name>
    <name type="ORF">AAEL003287</name>
</gene>
<dbReference type="EMBL" id="CH477268">
    <property type="protein sequence ID" value="EAT45431.1"/>
    <property type="molecule type" value="Genomic_DNA"/>
</dbReference>
<dbReference type="EMBL" id="CH477268">
    <property type="protein sequence ID" value="EAT45432.1"/>
    <property type="status" value="ALT_SEQ"/>
    <property type="molecule type" value="Genomic_DNA"/>
</dbReference>
<dbReference type="SMR" id="Q17FR9"/>
<dbReference type="FunCoup" id="Q17FR9">
    <property type="interactions" value="2360"/>
</dbReference>
<dbReference type="STRING" id="7159.Q17FR9"/>
<dbReference type="PaxDb" id="7159-AAEL003287-PA"/>
<dbReference type="EnsemblMetazoa" id="AAEL003287-RA">
    <property type="protein sequence ID" value="AAEL003287-PA"/>
    <property type="gene ID" value="AAEL003287"/>
</dbReference>
<dbReference type="GeneID" id="5577779"/>
<dbReference type="KEGG" id="aag:5577779"/>
<dbReference type="CTD" id="35539"/>
<dbReference type="VEuPathDB" id="VectorBase:AAEL003287"/>
<dbReference type="eggNOG" id="KOG2295">
    <property type="taxonomic scope" value="Eukaryota"/>
</dbReference>
<dbReference type="InParanoid" id="Q17FR9"/>
<dbReference type="OMA" id="GARDEWS"/>
<dbReference type="OrthoDB" id="342064at2759"/>
<dbReference type="PhylomeDB" id="Q17FR9"/>
<dbReference type="Proteomes" id="UP000008820">
    <property type="component" value="Chromosome 3"/>
</dbReference>
<dbReference type="Proteomes" id="UP000682892">
    <property type="component" value="Chromosome 3"/>
</dbReference>
<dbReference type="GO" id="GO:0016604">
    <property type="term" value="C:nuclear body"/>
    <property type="evidence" value="ECO:0007669"/>
    <property type="project" value="TreeGrafter"/>
</dbReference>
<dbReference type="GO" id="GO:0005654">
    <property type="term" value="C:nucleoplasm"/>
    <property type="evidence" value="ECO:0000250"/>
    <property type="project" value="UniProtKB"/>
</dbReference>
<dbReference type="GO" id="GO:0003676">
    <property type="term" value="F:nucleic acid binding"/>
    <property type="evidence" value="ECO:0007669"/>
    <property type="project" value="InterPro"/>
</dbReference>
<dbReference type="GO" id="GO:0031053">
    <property type="term" value="P:primary miRNA processing"/>
    <property type="evidence" value="ECO:0000250"/>
    <property type="project" value="UniProtKB"/>
</dbReference>
<dbReference type="CDD" id="cd00590">
    <property type="entry name" value="RRM_SF"/>
    <property type="match status" value="1"/>
</dbReference>
<dbReference type="InterPro" id="IPR035979">
    <property type="entry name" value="RBD_domain_sf"/>
</dbReference>
<dbReference type="InterPro" id="IPR039727">
    <property type="entry name" value="SE/Ars2"/>
</dbReference>
<dbReference type="InterPro" id="IPR007042">
    <property type="entry name" value="SERRATE/Ars2_C"/>
</dbReference>
<dbReference type="InterPro" id="IPR021933">
    <property type="entry name" value="SERRATE/Ars2_N"/>
</dbReference>
<dbReference type="PANTHER" id="PTHR13165">
    <property type="entry name" value="ARSENITE-RESISTANCE PROTEIN 2"/>
    <property type="match status" value="1"/>
</dbReference>
<dbReference type="PANTHER" id="PTHR13165:SF0">
    <property type="entry name" value="SERRATE RNA EFFECTOR MOLECULE HOMOLOG"/>
    <property type="match status" value="1"/>
</dbReference>
<dbReference type="Pfam" id="PF04959">
    <property type="entry name" value="ARS2"/>
    <property type="match status" value="1"/>
</dbReference>
<dbReference type="Pfam" id="PF12066">
    <property type="entry name" value="SERRATE_Ars2_N"/>
    <property type="match status" value="1"/>
</dbReference>
<dbReference type="SUPFAM" id="SSF54928">
    <property type="entry name" value="RNA-binding domain, RBD"/>
    <property type="match status" value="1"/>
</dbReference>
<protein>
    <recommendedName>
        <fullName>Serrate RNA effector molecule homolog</fullName>
    </recommendedName>
    <alternativeName>
        <fullName>Arsenite-resistance protein 2 homolog</fullName>
    </alternativeName>
</protein>
<reference key="1">
    <citation type="journal article" date="2007" name="Science">
        <title>Genome sequence of Aedes aegypti, a major arbovirus vector.</title>
        <authorList>
            <person name="Nene V."/>
            <person name="Wortman J.R."/>
            <person name="Lawson D."/>
            <person name="Haas B.J."/>
            <person name="Kodira C.D."/>
            <person name="Tu Z.J."/>
            <person name="Loftus B.J."/>
            <person name="Xi Z."/>
            <person name="Megy K."/>
            <person name="Grabherr M."/>
            <person name="Ren Q."/>
            <person name="Zdobnov E.M."/>
            <person name="Lobo N.F."/>
            <person name="Campbell K.S."/>
            <person name="Brown S.E."/>
            <person name="Bonaldo M.F."/>
            <person name="Zhu J."/>
            <person name="Sinkins S.P."/>
            <person name="Hogenkamp D.G."/>
            <person name="Amedeo P."/>
            <person name="Arensburger P."/>
            <person name="Atkinson P.W."/>
            <person name="Bidwell S.L."/>
            <person name="Biedler J."/>
            <person name="Birney E."/>
            <person name="Bruggner R.V."/>
            <person name="Costas J."/>
            <person name="Coy M.R."/>
            <person name="Crabtree J."/>
            <person name="Crawford M."/>
            <person name="DeBruyn B."/>
            <person name="DeCaprio D."/>
            <person name="Eiglmeier K."/>
            <person name="Eisenstadt E."/>
            <person name="El-Dorry H."/>
            <person name="Gelbart W.M."/>
            <person name="Gomes S.L."/>
            <person name="Hammond M."/>
            <person name="Hannick L.I."/>
            <person name="Hogan J.R."/>
            <person name="Holmes M.H."/>
            <person name="Jaffe D."/>
            <person name="Johnston S.J."/>
            <person name="Kennedy R.C."/>
            <person name="Koo H."/>
            <person name="Kravitz S."/>
            <person name="Kriventseva E.V."/>
            <person name="Kulp D."/>
            <person name="Labutti K."/>
            <person name="Lee E."/>
            <person name="Li S."/>
            <person name="Lovin D.D."/>
            <person name="Mao C."/>
            <person name="Mauceli E."/>
            <person name="Menck C.F."/>
            <person name="Miller J.R."/>
            <person name="Montgomery P."/>
            <person name="Mori A."/>
            <person name="Nascimento A.L."/>
            <person name="Naveira H.F."/>
            <person name="Nusbaum C."/>
            <person name="O'Leary S.B."/>
            <person name="Orvis J."/>
            <person name="Pertea M."/>
            <person name="Quesneville H."/>
            <person name="Reidenbach K.R."/>
            <person name="Rogers Y.-H.C."/>
            <person name="Roth C.W."/>
            <person name="Schneider J.R."/>
            <person name="Schatz M."/>
            <person name="Shumway M."/>
            <person name="Stanke M."/>
            <person name="Stinson E.O."/>
            <person name="Tubio J.M.C."/>
            <person name="Vanzee J.P."/>
            <person name="Verjovski-Almeida S."/>
            <person name="Werner D."/>
            <person name="White O.R."/>
            <person name="Wyder S."/>
            <person name="Zeng Q."/>
            <person name="Zhao Q."/>
            <person name="Zhao Y."/>
            <person name="Hill C.A."/>
            <person name="Raikhel A.S."/>
            <person name="Soares M.B."/>
            <person name="Knudson D.L."/>
            <person name="Lee N.H."/>
            <person name="Galagan J."/>
            <person name="Salzberg S.L."/>
            <person name="Paulsen I.T."/>
            <person name="Dimopoulos G."/>
            <person name="Collins F.H."/>
            <person name="Bruce B."/>
            <person name="Fraser-Liggett C.M."/>
            <person name="Severson D.W."/>
        </authorList>
    </citation>
    <scope>NUCLEOTIDE SEQUENCE [LARGE SCALE GENOMIC DNA]</scope>
    <source>
        <strain>LVPib12</strain>
    </source>
</reference>
<name>SRRT_AEDAE</name>
<accession>Q17FR9</accession>
<accession>Q17FS0</accession>
<comment type="function">
    <text evidence="1">Acts as a mediator between the cap-binding complex (CBC) and RNA-mediated gene silencing (RNAi). Involved in innate immunity via the short interfering RNAs (siRNAs) processing machinery by restricting the viral RNA production. Also involved microRNA (miRNA)-mediated silencing by contributing to the stability and delivery of primary miRNA transcripts to the primary miRNA processing complex (By similarity).</text>
</comment>
<comment type="subcellular location">
    <subcellularLocation>
        <location evidence="1">Nucleus</location>
    </subcellularLocation>
</comment>
<comment type="similarity">
    <text evidence="3">Belongs to the ARS2 family.</text>
</comment>
<comment type="sequence caution" evidence="3">
    <conflict type="erroneous gene model prediction">
        <sequence resource="EMBL-CDS" id="EAT45432"/>
    </conflict>
</comment>
<evidence type="ECO:0000250" key="1"/>
<evidence type="ECO:0000256" key="2">
    <source>
        <dbReference type="SAM" id="MobiDB-lite"/>
    </source>
</evidence>
<evidence type="ECO:0000305" key="3"/>
<sequence>MGDSDDEYDRKRRDKFRGERSAGESYARGADRADRSRGRDEWAERGRPRQDYRDYRPPPRDRGYSPTREGPPMKRMRGDGWGDDARPRFGGHEPYGMYGGYNHDHFGMHPAGPYGHPGGLHPREQQSAGDMQTQPCMMTLKQFLATQDDSISDSEAIQKYNDYKLEFKRQQLNEFFVAHKDEEWFKMKYHPEESLKRKEEQFGFLKRRCDVFVELLDHGDISKVSVDTSNTDPLLRLLDTVVIKLEGGTDEDLKVLDEKPVEIVKILPEKPKVEVKKEPTLEDTIKKEKISIKEEKVEEADKPKEEKDDDKEKPAAEGEEPEGEKNDAEKEVTAEREDMDAEPAAKEPEPEEEPSRKKDRRKRSRSDSGSSSSSSSSSSSSDSEDEKEKEKEDKEEEEEKKETEEEAAPKSPKPVEEGEKEPQEEVENNGHKSGDEEEATKKDQAEPEKMDTDEAVVENNKESEEAEKEKDTSKDEEEANKESNEDKQESEKTETIDLVKDTTVGNSPRALHRTSSIFLRNLAPSITKAEVEAMCKRYNGFLRVAIADPLLERRWFRRGWVTFRRDVNIKEICWNLNNIRLRDCELGAIVNKDLSRRVRPVNGLTCHKTIVRSDIKLCAKIAHNLDDKVGLWKEQEDNGEKNGESFGLQSKNPVLQNITDYLIEEASAEEDELLGLSTEAAKKSNDGELVERDTQLIEVLDKLILYLRVVHSIDFYNHCEYPYEDEMPNRCGIIHARGPPPQNKVTSNEIQEYIRTFEGKMGSFLARAVDLEEEEMKKLGAKDAEAEVEKFIQANTQELAKDKWLCPLSGKKFKGPDFVRKHIFNKHNEKVDEVRKEVEYFNNYLKDTKRPQLPEHPGNTKKAPSDAAPPTAGYRPPYGMAHAYAPMYAPYAQPMMAPAGRARPGFGRGGREPMGEIRRPIIAYSDLDMPNFSDSFL</sequence>
<keyword id="KW-0539">Nucleus</keyword>
<keyword id="KW-1185">Reference proteome</keyword>
<keyword id="KW-0943">RNA-mediated gene silencing</keyword>
<organism>
    <name type="scientific">Aedes aegypti</name>
    <name type="common">Yellowfever mosquito</name>
    <name type="synonym">Culex aegypti</name>
    <dbReference type="NCBI Taxonomy" id="7159"/>
    <lineage>
        <taxon>Eukaryota</taxon>
        <taxon>Metazoa</taxon>
        <taxon>Ecdysozoa</taxon>
        <taxon>Arthropoda</taxon>
        <taxon>Hexapoda</taxon>
        <taxon>Insecta</taxon>
        <taxon>Pterygota</taxon>
        <taxon>Neoptera</taxon>
        <taxon>Endopterygota</taxon>
        <taxon>Diptera</taxon>
        <taxon>Nematocera</taxon>
        <taxon>Culicoidea</taxon>
        <taxon>Culicidae</taxon>
        <taxon>Culicinae</taxon>
        <taxon>Aedini</taxon>
        <taxon>Aedes</taxon>
        <taxon>Stegomyia</taxon>
    </lineage>
</organism>